<dbReference type="EMBL" id="CP000918">
    <property type="protein sequence ID" value="ACO16250.1"/>
    <property type="molecule type" value="Genomic_DNA"/>
</dbReference>
<dbReference type="RefSeq" id="WP_001085809.1">
    <property type="nucleotide sequence ID" value="NC_012468.1"/>
</dbReference>
<dbReference type="SMR" id="C1C5Z8"/>
<dbReference type="GeneID" id="93739230"/>
<dbReference type="KEGG" id="snm:SP70585_0691"/>
<dbReference type="HOGENOM" id="CLU_074237_2_1_9"/>
<dbReference type="Proteomes" id="UP000002211">
    <property type="component" value="Chromosome"/>
</dbReference>
<dbReference type="GO" id="GO:0022625">
    <property type="term" value="C:cytosolic large ribosomal subunit"/>
    <property type="evidence" value="ECO:0007669"/>
    <property type="project" value="TreeGrafter"/>
</dbReference>
<dbReference type="GO" id="GO:0070180">
    <property type="term" value="F:large ribosomal subunit rRNA binding"/>
    <property type="evidence" value="ECO:0007669"/>
    <property type="project" value="UniProtKB-UniRule"/>
</dbReference>
<dbReference type="GO" id="GO:0003735">
    <property type="term" value="F:structural constituent of ribosome"/>
    <property type="evidence" value="ECO:0007669"/>
    <property type="project" value="InterPro"/>
</dbReference>
<dbReference type="GO" id="GO:0006412">
    <property type="term" value="P:translation"/>
    <property type="evidence" value="ECO:0007669"/>
    <property type="project" value="UniProtKB-UniRule"/>
</dbReference>
<dbReference type="CDD" id="cd00349">
    <property type="entry name" value="Ribosomal_L11"/>
    <property type="match status" value="1"/>
</dbReference>
<dbReference type="FunFam" id="1.10.10.250:FF:000001">
    <property type="entry name" value="50S ribosomal protein L11"/>
    <property type="match status" value="1"/>
</dbReference>
<dbReference type="FunFam" id="3.30.1550.10:FF:000001">
    <property type="entry name" value="50S ribosomal protein L11"/>
    <property type="match status" value="1"/>
</dbReference>
<dbReference type="Gene3D" id="1.10.10.250">
    <property type="entry name" value="Ribosomal protein L11, C-terminal domain"/>
    <property type="match status" value="1"/>
</dbReference>
<dbReference type="Gene3D" id="3.30.1550.10">
    <property type="entry name" value="Ribosomal protein L11/L12, N-terminal domain"/>
    <property type="match status" value="1"/>
</dbReference>
<dbReference type="HAMAP" id="MF_00736">
    <property type="entry name" value="Ribosomal_uL11"/>
    <property type="match status" value="1"/>
</dbReference>
<dbReference type="InterPro" id="IPR000911">
    <property type="entry name" value="Ribosomal_uL11"/>
</dbReference>
<dbReference type="InterPro" id="IPR006519">
    <property type="entry name" value="Ribosomal_uL11_bac-typ"/>
</dbReference>
<dbReference type="InterPro" id="IPR020783">
    <property type="entry name" value="Ribosomal_uL11_C"/>
</dbReference>
<dbReference type="InterPro" id="IPR036769">
    <property type="entry name" value="Ribosomal_uL11_C_sf"/>
</dbReference>
<dbReference type="InterPro" id="IPR020785">
    <property type="entry name" value="Ribosomal_uL11_CS"/>
</dbReference>
<dbReference type="InterPro" id="IPR020784">
    <property type="entry name" value="Ribosomal_uL11_N"/>
</dbReference>
<dbReference type="InterPro" id="IPR036796">
    <property type="entry name" value="Ribosomal_uL11_N_sf"/>
</dbReference>
<dbReference type="NCBIfam" id="TIGR01632">
    <property type="entry name" value="L11_bact"/>
    <property type="match status" value="1"/>
</dbReference>
<dbReference type="PANTHER" id="PTHR11661">
    <property type="entry name" value="60S RIBOSOMAL PROTEIN L12"/>
    <property type="match status" value="1"/>
</dbReference>
<dbReference type="PANTHER" id="PTHR11661:SF1">
    <property type="entry name" value="LARGE RIBOSOMAL SUBUNIT PROTEIN UL11M"/>
    <property type="match status" value="1"/>
</dbReference>
<dbReference type="Pfam" id="PF00298">
    <property type="entry name" value="Ribosomal_L11"/>
    <property type="match status" value="1"/>
</dbReference>
<dbReference type="Pfam" id="PF03946">
    <property type="entry name" value="Ribosomal_L11_N"/>
    <property type="match status" value="1"/>
</dbReference>
<dbReference type="SMART" id="SM00649">
    <property type="entry name" value="RL11"/>
    <property type="match status" value="1"/>
</dbReference>
<dbReference type="SUPFAM" id="SSF54747">
    <property type="entry name" value="Ribosomal L11/L12e N-terminal domain"/>
    <property type="match status" value="1"/>
</dbReference>
<dbReference type="SUPFAM" id="SSF46906">
    <property type="entry name" value="Ribosomal protein L11, C-terminal domain"/>
    <property type="match status" value="1"/>
</dbReference>
<dbReference type="PROSITE" id="PS00359">
    <property type="entry name" value="RIBOSOMAL_L11"/>
    <property type="match status" value="1"/>
</dbReference>
<sequence length="141" mass="14800">MAKKVEKLVKLQIPAGKATPAPPVGPALGQAGINIMGFTKEFNARTADQAGMIIPVVISVYEDKSFTFVTKTPPAAVLLKKAAGVEKGSGTPNKTKVATVTRAQVQEIAETKMPDLNAANVESAMRMIEGTARSMGFTVVD</sequence>
<reference key="1">
    <citation type="journal article" date="2010" name="Genome Biol.">
        <title>Structure and dynamics of the pan-genome of Streptococcus pneumoniae and closely related species.</title>
        <authorList>
            <person name="Donati C."/>
            <person name="Hiller N.L."/>
            <person name="Tettelin H."/>
            <person name="Muzzi A."/>
            <person name="Croucher N.J."/>
            <person name="Angiuoli S.V."/>
            <person name="Oggioni M."/>
            <person name="Dunning Hotopp J.C."/>
            <person name="Hu F.Z."/>
            <person name="Riley D.R."/>
            <person name="Covacci A."/>
            <person name="Mitchell T.J."/>
            <person name="Bentley S.D."/>
            <person name="Kilian M."/>
            <person name="Ehrlich G.D."/>
            <person name="Rappuoli R."/>
            <person name="Moxon E.R."/>
            <person name="Masignani V."/>
        </authorList>
    </citation>
    <scope>NUCLEOTIDE SEQUENCE [LARGE SCALE GENOMIC DNA]</scope>
    <source>
        <strain>70585</strain>
    </source>
</reference>
<protein>
    <recommendedName>
        <fullName evidence="1">Large ribosomal subunit protein uL11</fullName>
    </recommendedName>
    <alternativeName>
        <fullName evidence="2">50S ribosomal protein L11</fullName>
    </alternativeName>
</protein>
<proteinExistence type="inferred from homology"/>
<feature type="chain" id="PRO_1000195722" description="Large ribosomal subunit protein uL11">
    <location>
        <begin position="1"/>
        <end position="141"/>
    </location>
</feature>
<comment type="function">
    <text evidence="1">Forms part of the ribosomal stalk which helps the ribosome interact with GTP-bound translation factors.</text>
</comment>
<comment type="subunit">
    <text evidence="1">Part of the ribosomal stalk of the 50S ribosomal subunit. Interacts with L10 and the large rRNA to form the base of the stalk. L10 forms an elongated spine to which L12 dimers bind in a sequential fashion forming a multimeric L10(L12)X complex.</text>
</comment>
<comment type="PTM">
    <text evidence="1">One or more lysine residues are methylated.</text>
</comment>
<comment type="similarity">
    <text evidence="1">Belongs to the universal ribosomal protein uL11 family.</text>
</comment>
<organism>
    <name type="scientific">Streptococcus pneumoniae (strain 70585)</name>
    <dbReference type="NCBI Taxonomy" id="488221"/>
    <lineage>
        <taxon>Bacteria</taxon>
        <taxon>Bacillati</taxon>
        <taxon>Bacillota</taxon>
        <taxon>Bacilli</taxon>
        <taxon>Lactobacillales</taxon>
        <taxon>Streptococcaceae</taxon>
        <taxon>Streptococcus</taxon>
    </lineage>
</organism>
<accession>C1C5Z8</accession>
<evidence type="ECO:0000255" key="1">
    <source>
        <dbReference type="HAMAP-Rule" id="MF_00736"/>
    </source>
</evidence>
<evidence type="ECO:0000305" key="2"/>
<name>RL11_STRP7</name>
<keyword id="KW-0488">Methylation</keyword>
<keyword id="KW-0687">Ribonucleoprotein</keyword>
<keyword id="KW-0689">Ribosomal protein</keyword>
<keyword id="KW-0694">RNA-binding</keyword>
<keyword id="KW-0699">rRNA-binding</keyword>
<gene>
    <name evidence="1" type="primary">rplK</name>
    <name type="ordered locus">SP70585_0691</name>
</gene>